<reference key="1">
    <citation type="journal article" date="2002" name="J. Bacteriol.">
        <title>Whole-genome comparison of Mycobacterium tuberculosis clinical and laboratory strains.</title>
        <authorList>
            <person name="Fleischmann R.D."/>
            <person name="Alland D."/>
            <person name="Eisen J.A."/>
            <person name="Carpenter L."/>
            <person name="White O."/>
            <person name="Peterson J.D."/>
            <person name="DeBoy R.T."/>
            <person name="Dodson R.J."/>
            <person name="Gwinn M.L."/>
            <person name="Haft D.H."/>
            <person name="Hickey E.K."/>
            <person name="Kolonay J.F."/>
            <person name="Nelson W.C."/>
            <person name="Umayam L.A."/>
            <person name="Ermolaeva M.D."/>
            <person name="Salzberg S.L."/>
            <person name="Delcher A."/>
            <person name="Utterback T.R."/>
            <person name="Weidman J.F."/>
            <person name="Khouri H.M."/>
            <person name="Gill J."/>
            <person name="Mikula A."/>
            <person name="Bishai W."/>
            <person name="Jacobs W.R. Jr."/>
            <person name="Venter J.C."/>
            <person name="Fraser C.M."/>
        </authorList>
    </citation>
    <scope>NUCLEOTIDE SEQUENCE [LARGE SCALE GENOMIC DNA]</scope>
    <source>
        <strain>CDC 1551 / Oshkosh</strain>
    </source>
</reference>
<dbReference type="EC" id="3.1.3.-"/>
<dbReference type="EMBL" id="AE000516">
    <property type="protein sequence ID" value="AAK45574.1"/>
    <property type="status" value="ALT_INIT"/>
    <property type="molecule type" value="Genomic_DNA"/>
</dbReference>
<dbReference type="PIR" id="D70755">
    <property type="entry name" value="D70755"/>
</dbReference>
<dbReference type="SMR" id="P9WGF8"/>
<dbReference type="KEGG" id="mtc:MT1313"/>
<dbReference type="PATRIC" id="fig|83331.31.peg.1419"/>
<dbReference type="HOGENOM" id="CLU_084603_2_1_11"/>
<dbReference type="Proteomes" id="UP000001020">
    <property type="component" value="Chromosome"/>
</dbReference>
<dbReference type="GO" id="GO:0016787">
    <property type="term" value="F:hydrolase activity"/>
    <property type="evidence" value="ECO:0007669"/>
    <property type="project" value="UniProtKB-KW"/>
</dbReference>
<dbReference type="CDD" id="cd07067">
    <property type="entry name" value="HP_PGM_like"/>
    <property type="match status" value="1"/>
</dbReference>
<dbReference type="Gene3D" id="3.40.50.1240">
    <property type="entry name" value="Phosphoglycerate mutase-like"/>
    <property type="match status" value="1"/>
</dbReference>
<dbReference type="InterPro" id="IPR013078">
    <property type="entry name" value="His_Pase_superF_clade-1"/>
</dbReference>
<dbReference type="InterPro" id="IPR029033">
    <property type="entry name" value="His_PPase_superfam"/>
</dbReference>
<dbReference type="InterPro" id="IPR051021">
    <property type="entry name" value="Mito_Ser/Thr_phosphatase"/>
</dbReference>
<dbReference type="PANTHER" id="PTHR20935">
    <property type="entry name" value="PHOSPHOGLYCERATE MUTASE-RELATED"/>
    <property type="match status" value="1"/>
</dbReference>
<dbReference type="PANTHER" id="PTHR20935:SF1">
    <property type="entry name" value="SLL1549 PROTEIN"/>
    <property type="match status" value="1"/>
</dbReference>
<dbReference type="Pfam" id="PF00300">
    <property type="entry name" value="His_Phos_1"/>
    <property type="match status" value="1"/>
</dbReference>
<dbReference type="SMART" id="SM00855">
    <property type="entry name" value="PGAM"/>
    <property type="match status" value="1"/>
</dbReference>
<dbReference type="SUPFAM" id="SSF53254">
    <property type="entry name" value="Phosphoglycerate mutase-like"/>
    <property type="match status" value="1"/>
</dbReference>
<comment type="similarity">
    <text evidence="1">Belongs to the SixA phosphatase family.</text>
</comment>
<comment type="sequence caution" evidence="1">
    <conflict type="erroneous initiation">
        <sequence resource="EMBL-CDS" id="AAK45574"/>
    </conflict>
</comment>
<proteinExistence type="inferred from homology"/>
<name>Y1276_MYCTO</name>
<evidence type="ECO:0000305" key="1"/>
<sequence>MRHAKSAYPDGIADHDRPLAPRGIREAGLAGGWLRANLPAVDAVLCSTATRARQTLAHTGIDAPARYAERLYGAAPGTVIEEINRVGDNVTTLLVVGHEPTTSALAIVLASISGTDAAVAERISEKFPTSGIAVLRVAGHWADVEPGCAALVGFHVPR</sequence>
<gene>
    <name type="ordered locus">MT1313</name>
</gene>
<organism>
    <name type="scientific">Mycobacterium tuberculosis (strain CDC 1551 / Oshkosh)</name>
    <dbReference type="NCBI Taxonomy" id="83331"/>
    <lineage>
        <taxon>Bacteria</taxon>
        <taxon>Bacillati</taxon>
        <taxon>Actinomycetota</taxon>
        <taxon>Actinomycetes</taxon>
        <taxon>Mycobacteriales</taxon>
        <taxon>Mycobacteriaceae</taxon>
        <taxon>Mycobacterium</taxon>
        <taxon>Mycobacterium tuberculosis complex</taxon>
    </lineage>
</organism>
<protein>
    <recommendedName>
        <fullName>Uncharacterized protein MT1313</fullName>
        <ecNumber>3.1.3.-</ecNumber>
    </recommendedName>
</protein>
<keyword id="KW-0378">Hydrolase</keyword>
<keyword id="KW-1185">Reference proteome</keyword>
<feature type="chain" id="PRO_0000428369" description="Uncharacterized protein MT1313">
    <location>
        <begin position="1"/>
        <end position="158"/>
    </location>
</feature>
<accession>P9WGF8</accession>
<accession>L0T6D9</accession>
<accession>Q11043</accession>